<keyword id="KW-0963">Cytoplasm</keyword>
<keyword id="KW-0251">Elongation factor</keyword>
<keyword id="KW-0648">Protein biosynthesis</keyword>
<keyword id="KW-1185">Reference proteome</keyword>
<evidence type="ECO:0000255" key="1">
    <source>
        <dbReference type="HAMAP-Rule" id="MF_00050"/>
    </source>
</evidence>
<gene>
    <name evidence="1" type="primary">tsf</name>
    <name type="ordered locus">Tlet_0459</name>
</gene>
<dbReference type="EMBL" id="CP000812">
    <property type="protein sequence ID" value="ABV33026.1"/>
    <property type="molecule type" value="Genomic_DNA"/>
</dbReference>
<dbReference type="RefSeq" id="WP_012002507.1">
    <property type="nucleotide sequence ID" value="NZ_BSDV01000001.1"/>
</dbReference>
<dbReference type="SMR" id="A8F4E2"/>
<dbReference type="STRING" id="416591.Tlet_0459"/>
<dbReference type="KEGG" id="tle:Tlet_0459"/>
<dbReference type="eggNOG" id="COG0264">
    <property type="taxonomic scope" value="Bacteria"/>
</dbReference>
<dbReference type="HOGENOM" id="CLU_047155_1_1_0"/>
<dbReference type="OrthoDB" id="9808348at2"/>
<dbReference type="Proteomes" id="UP000002016">
    <property type="component" value="Chromosome"/>
</dbReference>
<dbReference type="GO" id="GO:0005737">
    <property type="term" value="C:cytoplasm"/>
    <property type="evidence" value="ECO:0007669"/>
    <property type="project" value="UniProtKB-SubCell"/>
</dbReference>
<dbReference type="GO" id="GO:0003746">
    <property type="term" value="F:translation elongation factor activity"/>
    <property type="evidence" value="ECO:0007669"/>
    <property type="project" value="UniProtKB-UniRule"/>
</dbReference>
<dbReference type="CDD" id="cd14275">
    <property type="entry name" value="UBA_EF-Ts"/>
    <property type="match status" value="1"/>
</dbReference>
<dbReference type="FunFam" id="1.10.286.20:FF:000001">
    <property type="entry name" value="Elongation factor Ts"/>
    <property type="match status" value="1"/>
</dbReference>
<dbReference type="FunFam" id="1.10.8.10:FF:000001">
    <property type="entry name" value="Elongation factor Ts"/>
    <property type="match status" value="1"/>
</dbReference>
<dbReference type="Gene3D" id="1.10.286.20">
    <property type="match status" value="1"/>
</dbReference>
<dbReference type="Gene3D" id="1.10.8.10">
    <property type="entry name" value="DNA helicase RuvA subunit, C-terminal domain"/>
    <property type="match status" value="1"/>
</dbReference>
<dbReference type="Gene3D" id="3.30.479.20">
    <property type="entry name" value="Elongation factor Ts, dimerisation domain"/>
    <property type="match status" value="1"/>
</dbReference>
<dbReference type="HAMAP" id="MF_00050">
    <property type="entry name" value="EF_Ts"/>
    <property type="match status" value="1"/>
</dbReference>
<dbReference type="InterPro" id="IPR036402">
    <property type="entry name" value="EF-Ts_dimer_sf"/>
</dbReference>
<dbReference type="InterPro" id="IPR001816">
    <property type="entry name" value="Transl_elong_EFTs/EF1B"/>
</dbReference>
<dbReference type="InterPro" id="IPR014039">
    <property type="entry name" value="Transl_elong_EFTs/EF1B_dimer"/>
</dbReference>
<dbReference type="InterPro" id="IPR018101">
    <property type="entry name" value="Transl_elong_Ts_CS"/>
</dbReference>
<dbReference type="InterPro" id="IPR009060">
    <property type="entry name" value="UBA-like_sf"/>
</dbReference>
<dbReference type="NCBIfam" id="TIGR00116">
    <property type="entry name" value="tsf"/>
    <property type="match status" value="2"/>
</dbReference>
<dbReference type="PANTHER" id="PTHR11741">
    <property type="entry name" value="ELONGATION FACTOR TS"/>
    <property type="match status" value="1"/>
</dbReference>
<dbReference type="PANTHER" id="PTHR11741:SF0">
    <property type="entry name" value="ELONGATION FACTOR TS, MITOCHONDRIAL"/>
    <property type="match status" value="1"/>
</dbReference>
<dbReference type="Pfam" id="PF00889">
    <property type="entry name" value="EF_TS"/>
    <property type="match status" value="1"/>
</dbReference>
<dbReference type="SUPFAM" id="SSF54713">
    <property type="entry name" value="Elongation factor Ts (EF-Ts), dimerisation domain"/>
    <property type="match status" value="1"/>
</dbReference>
<dbReference type="SUPFAM" id="SSF46934">
    <property type="entry name" value="UBA-like"/>
    <property type="match status" value="1"/>
</dbReference>
<dbReference type="PROSITE" id="PS01127">
    <property type="entry name" value="EF_TS_2"/>
    <property type="match status" value="1"/>
</dbReference>
<sequence length="198" mass="22655">MQITADMVKKLREMTGAGVMECKTALTEADGDFEKAVEVLRKRGAAVAQKKAGRLTKEGIVTSYIHFNDKIGVLLELGCETDFVARMPEFKELAYNLAKHVAAMNPKYVTREDVPEEVLEKEKEIYRAQLENSNKPAAVVEKIVQGKLEKFYEEVCLYDQKYIFDDEKTVKEVVDELIGKIRENIRVTRFVRMRVGEE</sequence>
<feature type="chain" id="PRO_1000057360" description="Elongation factor Ts">
    <location>
        <begin position="1"/>
        <end position="198"/>
    </location>
</feature>
<feature type="region of interest" description="Involved in Mg(2+) ion dislocation from EF-Tu" evidence="1">
    <location>
        <begin position="81"/>
        <end position="84"/>
    </location>
</feature>
<accession>A8F4E2</accession>
<comment type="function">
    <text evidence="1">Associates with the EF-Tu.GDP complex and induces the exchange of GDP to GTP. It remains bound to the aminoacyl-tRNA.EF-Tu.GTP complex up to the GTP hydrolysis stage on the ribosome.</text>
</comment>
<comment type="subcellular location">
    <subcellularLocation>
        <location evidence="1">Cytoplasm</location>
    </subcellularLocation>
</comment>
<comment type="similarity">
    <text evidence="1">Belongs to the EF-Ts family.</text>
</comment>
<protein>
    <recommendedName>
        <fullName evidence="1">Elongation factor Ts</fullName>
        <shortName evidence="1">EF-Ts</shortName>
    </recommendedName>
</protein>
<reference key="1">
    <citation type="submission" date="2007-08" db="EMBL/GenBank/DDBJ databases">
        <title>Complete sequence of Thermotoga lettingae TMO.</title>
        <authorList>
            <consortium name="US DOE Joint Genome Institute"/>
            <person name="Copeland A."/>
            <person name="Lucas S."/>
            <person name="Lapidus A."/>
            <person name="Barry K."/>
            <person name="Glavina del Rio T."/>
            <person name="Dalin E."/>
            <person name="Tice H."/>
            <person name="Pitluck S."/>
            <person name="Foster B."/>
            <person name="Bruce D."/>
            <person name="Schmutz J."/>
            <person name="Larimer F."/>
            <person name="Land M."/>
            <person name="Hauser L."/>
            <person name="Kyrpides N."/>
            <person name="Mikhailova N."/>
            <person name="Nelson K."/>
            <person name="Gogarten J.P."/>
            <person name="Noll K."/>
            <person name="Richardson P."/>
        </authorList>
    </citation>
    <scope>NUCLEOTIDE SEQUENCE [LARGE SCALE GENOMIC DNA]</scope>
    <source>
        <strain>ATCC BAA-301 / DSM 14385 / NBRC 107922 / TMO</strain>
    </source>
</reference>
<name>EFTS_PSELT</name>
<organism>
    <name type="scientific">Pseudothermotoga lettingae (strain ATCC BAA-301 / DSM 14385 / NBRC 107922 / TMO)</name>
    <name type="common">Thermotoga lettingae</name>
    <dbReference type="NCBI Taxonomy" id="416591"/>
    <lineage>
        <taxon>Bacteria</taxon>
        <taxon>Thermotogati</taxon>
        <taxon>Thermotogota</taxon>
        <taxon>Thermotogae</taxon>
        <taxon>Thermotogales</taxon>
        <taxon>Thermotogaceae</taxon>
        <taxon>Pseudothermotoga</taxon>
    </lineage>
</organism>
<proteinExistence type="inferred from homology"/>